<sequence length="141" mass="15248">VLSAKDKTNISEAWGKIGGHAGEYGAEALERMFFVYPTTKTYFPHFDVSHGSAQVKGHGKKVADALTNAVGHLDDLPGALSALSDLHAHKLRVDPVNFKLLSHCLLVTLANHHPADFTPAVHASLDKFFASVSTVLTSKYR</sequence>
<feature type="chain" id="PRO_0000052691" description="Hemoglobin subunit alpha">
    <location>
        <begin position="1"/>
        <end position="141"/>
    </location>
</feature>
<feature type="peptide" id="PRO_0000455904" description="Hemopressin" evidence="2">
    <location>
        <begin position="95"/>
        <end position="103"/>
    </location>
</feature>
<feature type="domain" description="Globin" evidence="4">
    <location>
        <begin position="1"/>
        <end position="141"/>
    </location>
</feature>
<feature type="binding site" evidence="4">
    <location>
        <position position="58"/>
    </location>
    <ligand>
        <name>O2</name>
        <dbReference type="ChEBI" id="CHEBI:15379"/>
    </ligand>
</feature>
<feature type="binding site" description="proximal binding residue" evidence="4">
    <location>
        <position position="87"/>
    </location>
    <ligand>
        <name>heme b</name>
        <dbReference type="ChEBI" id="CHEBI:60344"/>
    </ligand>
    <ligandPart>
        <name>Fe</name>
        <dbReference type="ChEBI" id="CHEBI:18248"/>
    </ligandPart>
</feature>
<feature type="modified residue" description="Phosphoserine" evidence="3">
    <location>
        <position position="3"/>
    </location>
</feature>
<feature type="modified residue" description="N6-succinyllysine" evidence="1">
    <location>
        <position position="7"/>
    </location>
</feature>
<feature type="modified residue" description="Phosphothreonine" evidence="3">
    <location>
        <position position="8"/>
    </location>
</feature>
<feature type="modified residue" description="N6-acetyllysine; alternate" evidence="3">
    <location>
        <position position="16"/>
    </location>
</feature>
<feature type="modified residue" description="N6-succinyllysine; alternate" evidence="1">
    <location>
        <position position="16"/>
    </location>
</feature>
<feature type="modified residue" description="Phosphotyrosine" evidence="3">
    <location>
        <position position="24"/>
    </location>
</feature>
<feature type="modified residue" description="N6-succinyllysine" evidence="1">
    <location>
        <position position="40"/>
    </location>
</feature>
<feature type="modified residue" description="Phosphoserine" evidence="3">
    <location>
        <position position="49"/>
    </location>
</feature>
<feature type="modified residue" description="Phosphoserine" evidence="1">
    <location>
        <position position="102"/>
    </location>
</feature>
<feature type="modified residue" description="Phosphothreonine" evidence="1">
    <location>
        <position position="108"/>
    </location>
</feature>
<feature type="modified residue" description="Phosphoserine" evidence="1">
    <location>
        <position position="124"/>
    </location>
</feature>
<feature type="modified residue" description="Phosphoserine" evidence="1">
    <location>
        <position position="131"/>
    </location>
</feature>
<feature type="modified residue" description="Phosphothreonine" evidence="1">
    <location>
        <position position="134"/>
    </location>
</feature>
<feature type="modified residue" description="Phosphothreonine" evidence="1">
    <location>
        <position position="137"/>
    </location>
</feature>
<feature type="modified residue" description="Phosphoserine" evidence="1">
    <location>
        <position position="138"/>
    </location>
</feature>
<organism>
    <name type="scientific">Mesocricetus auratus</name>
    <name type="common">Golden hamster</name>
    <dbReference type="NCBI Taxonomy" id="10036"/>
    <lineage>
        <taxon>Eukaryota</taxon>
        <taxon>Metazoa</taxon>
        <taxon>Chordata</taxon>
        <taxon>Craniata</taxon>
        <taxon>Vertebrata</taxon>
        <taxon>Euteleostomi</taxon>
        <taxon>Mammalia</taxon>
        <taxon>Eutheria</taxon>
        <taxon>Euarchontoglires</taxon>
        <taxon>Glires</taxon>
        <taxon>Rodentia</taxon>
        <taxon>Myomorpha</taxon>
        <taxon>Muroidea</taxon>
        <taxon>Cricetidae</taxon>
        <taxon>Cricetinae</taxon>
        <taxon>Mesocricetus</taxon>
    </lineage>
</organism>
<name>HBA_MESAU</name>
<comment type="function">
    <text>Involved in oxygen transport from the lung to the various peripheral tissues.</text>
</comment>
<comment type="function">
    <molecule>Hemopressin</molecule>
    <text evidence="2">Hemopressin acts as an antagonist peptide of the cannabinoid receptor CNR1. Hemopressin-binding efficiently blocks cannabinoid receptor CNR1 and subsequent signaling.</text>
</comment>
<comment type="subunit">
    <text>Heterotetramer of two alpha chains and two beta chains.</text>
</comment>
<comment type="tissue specificity">
    <text>Red blood cells.</text>
</comment>
<comment type="similarity">
    <text evidence="4">Belongs to the globin family.</text>
</comment>
<gene>
    <name type="primary">HBA</name>
</gene>
<dbReference type="EMBL" id="X57029">
    <property type="protein sequence ID" value="CAA40345.1"/>
    <property type="molecule type" value="mRNA"/>
</dbReference>
<dbReference type="PIR" id="A02267">
    <property type="entry name" value="HAHY"/>
</dbReference>
<dbReference type="SMR" id="P01945"/>
<dbReference type="Proteomes" id="UP000189706">
    <property type="component" value="Unplaced"/>
</dbReference>
<dbReference type="GO" id="GO:0072562">
    <property type="term" value="C:blood microparticle"/>
    <property type="evidence" value="ECO:0007669"/>
    <property type="project" value="TreeGrafter"/>
</dbReference>
<dbReference type="GO" id="GO:0031838">
    <property type="term" value="C:haptoglobin-hemoglobin complex"/>
    <property type="evidence" value="ECO:0007669"/>
    <property type="project" value="TreeGrafter"/>
</dbReference>
<dbReference type="GO" id="GO:0005833">
    <property type="term" value="C:hemoglobin complex"/>
    <property type="evidence" value="ECO:0007669"/>
    <property type="project" value="InterPro"/>
</dbReference>
<dbReference type="GO" id="GO:0031720">
    <property type="term" value="F:haptoglobin binding"/>
    <property type="evidence" value="ECO:0007669"/>
    <property type="project" value="TreeGrafter"/>
</dbReference>
<dbReference type="GO" id="GO:0020037">
    <property type="term" value="F:heme binding"/>
    <property type="evidence" value="ECO:0007669"/>
    <property type="project" value="InterPro"/>
</dbReference>
<dbReference type="GO" id="GO:0005506">
    <property type="term" value="F:iron ion binding"/>
    <property type="evidence" value="ECO:0007669"/>
    <property type="project" value="InterPro"/>
</dbReference>
<dbReference type="GO" id="GO:0043177">
    <property type="term" value="F:organic acid binding"/>
    <property type="evidence" value="ECO:0007669"/>
    <property type="project" value="TreeGrafter"/>
</dbReference>
<dbReference type="GO" id="GO:0019825">
    <property type="term" value="F:oxygen binding"/>
    <property type="evidence" value="ECO:0007669"/>
    <property type="project" value="InterPro"/>
</dbReference>
<dbReference type="GO" id="GO:0005344">
    <property type="term" value="F:oxygen carrier activity"/>
    <property type="evidence" value="ECO:0007669"/>
    <property type="project" value="UniProtKB-KW"/>
</dbReference>
<dbReference type="GO" id="GO:0004601">
    <property type="term" value="F:peroxidase activity"/>
    <property type="evidence" value="ECO:0007669"/>
    <property type="project" value="TreeGrafter"/>
</dbReference>
<dbReference type="GO" id="GO:0042744">
    <property type="term" value="P:hydrogen peroxide catabolic process"/>
    <property type="evidence" value="ECO:0007669"/>
    <property type="project" value="TreeGrafter"/>
</dbReference>
<dbReference type="CDD" id="cd08927">
    <property type="entry name" value="Hb-alpha-like"/>
    <property type="match status" value="1"/>
</dbReference>
<dbReference type="FunFam" id="1.10.490.10:FF:000002">
    <property type="entry name" value="Hemoglobin subunit alpha"/>
    <property type="match status" value="1"/>
</dbReference>
<dbReference type="Gene3D" id="1.10.490.10">
    <property type="entry name" value="Globins"/>
    <property type="match status" value="1"/>
</dbReference>
<dbReference type="InterPro" id="IPR000971">
    <property type="entry name" value="Globin"/>
</dbReference>
<dbReference type="InterPro" id="IPR009050">
    <property type="entry name" value="Globin-like_sf"/>
</dbReference>
<dbReference type="InterPro" id="IPR012292">
    <property type="entry name" value="Globin/Proto"/>
</dbReference>
<dbReference type="InterPro" id="IPR002338">
    <property type="entry name" value="Hemoglobin_a-typ"/>
</dbReference>
<dbReference type="InterPro" id="IPR050056">
    <property type="entry name" value="Hemoglobin_oxygen_transport"/>
</dbReference>
<dbReference type="InterPro" id="IPR002339">
    <property type="entry name" value="Hemoglobin_pi"/>
</dbReference>
<dbReference type="PANTHER" id="PTHR11442">
    <property type="entry name" value="HEMOGLOBIN FAMILY MEMBER"/>
    <property type="match status" value="1"/>
</dbReference>
<dbReference type="PANTHER" id="PTHR11442:SF48">
    <property type="entry name" value="HEMOGLOBIN SUBUNIT ALPHA"/>
    <property type="match status" value="1"/>
</dbReference>
<dbReference type="Pfam" id="PF00042">
    <property type="entry name" value="Globin"/>
    <property type="match status" value="1"/>
</dbReference>
<dbReference type="PRINTS" id="PR00612">
    <property type="entry name" value="ALPHAHAEM"/>
</dbReference>
<dbReference type="PRINTS" id="PR00815">
    <property type="entry name" value="PIHAEM"/>
</dbReference>
<dbReference type="SUPFAM" id="SSF46458">
    <property type="entry name" value="Globin-like"/>
    <property type="match status" value="1"/>
</dbReference>
<dbReference type="PROSITE" id="PS01033">
    <property type="entry name" value="GLOBIN"/>
    <property type="match status" value="1"/>
</dbReference>
<protein>
    <recommendedName>
        <fullName>Hemoglobin subunit alpha</fullName>
    </recommendedName>
    <alternativeName>
        <fullName>Alpha-globin</fullName>
    </alternativeName>
    <alternativeName>
        <fullName>Hemoglobin alpha chain</fullName>
    </alternativeName>
    <component>
        <recommendedName>
            <fullName evidence="2">Hemopressin</fullName>
        </recommendedName>
    </component>
</protein>
<accession>P01945</accession>
<keyword id="KW-0007">Acetylation</keyword>
<keyword id="KW-0903">Direct protein sequencing</keyword>
<keyword id="KW-0349">Heme</keyword>
<keyword id="KW-0408">Iron</keyword>
<keyword id="KW-0479">Metal-binding</keyword>
<keyword id="KW-0561">Oxygen transport</keyword>
<keyword id="KW-0597">Phosphoprotein</keyword>
<keyword id="KW-1185">Reference proteome</keyword>
<keyword id="KW-0813">Transport</keyword>
<proteinExistence type="evidence at protein level"/>
<reference key="1">
    <citation type="journal article" date="1980" name="J. Chem. Soc. Pak.">
        <title>Respiration at high altitudes, phosphate-protein-interaction: sequence of the hemoglobins of the hamster (Mesocricetus aureatus) and the camel (Camelus ferus, Camelidae).</title>
        <authorList>
            <person name="Braunitzer G."/>
            <person name="Schrank B."/>
            <person name="Stangl A."/>
            <person name="Wiesner H."/>
        </authorList>
    </citation>
    <scope>PROTEIN SEQUENCE</scope>
</reference>
<reference key="2">
    <citation type="journal article" date="1992" name="Biochim. Biophys. Acta">
        <title>Cloning of two adult hamster globin cDNAs (alpha and beta major).</title>
        <authorList>
            <person name="Lee K.M."/>
            <person name="Subar M."/>
            <person name="Li H."/>
            <person name="Boussios T."/>
        </authorList>
    </citation>
    <scope>NUCLEOTIDE SEQUENCE [MRNA] OF 38-141</scope>
</reference>
<evidence type="ECO:0000250" key="1">
    <source>
        <dbReference type="UniProtKB" id="P01942"/>
    </source>
</evidence>
<evidence type="ECO:0000250" key="2">
    <source>
        <dbReference type="UniProtKB" id="P01946"/>
    </source>
</evidence>
<evidence type="ECO:0000250" key="3">
    <source>
        <dbReference type="UniProtKB" id="P69905"/>
    </source>
</evidence>
<evidence type="ECO:0000255" key="4">
    <source>
        <dbReference type="PROSITE-ProRule" id="PRU00238"/>
    </source>
</evidence>